<dbReference type="EMBL" id="AF102237">
    <property type="protein sequence ID" value="AAC99418.1"/>
    <property type="molecule type" value="mRNA"/>
</dbReference>
<dbReference type="EMBL" id="AE014134">
    <property type="protein sequence ID" value="AAF53536.1"/>
    <property type="molecule type" value="Genomic_DNA"/>
</dbReference>
<dbReference type="EMBL" id="AY060686">
    <property type="protein sequence ID" value="AAL28234.1"/>
    <property type="molecule type" value="mRNA"/>
</dbReference>
<dbReference type="RefSeq" id="NP_477257.2">
    <property type="nucleotide sequence ID" value="NM_057909.5"/>
</dbReference>
<dbReference type="PDB" id="1JND">
    <property type="method" value="X-ray"/>
    <property type="resolution" value="1.30 A"/>
    <property type="chains" value="A=21-440"/>
</dbReference>
<dbReference type="PDB" id="1JNE">
    <property type="method" value="X-ray"/>
    <property type="resolution" value="1.70 A"/>
    <property type="chains" value="A=21-440"/>
</dbReference>
<dbReference type="PDBsum" id="1JND"/>
<dbReference type="PDBsum" id="1JNE"/>
<dbReference type="SMR" id="Q9V3D4"/>
<dbReference type="BioGRID" id="60988">
    <property type="interactions" value="2"/>
</dbReference>
<dbReference type="FunCoup" id="Q9V3D4">
    <property type="interactions" value="42"/>
</dbReference>
<dbReference type="IntAct" id="Q9V3D4">
    <property type="interactions" value="1"/>
</dbReference>
<dbReference type="STRING" id="7227.FBpp0080418"/>
<dbReference type="CAZy" id="GH18">
    <property type="family name" value="Glycoside Hydrolase Family 18"/>
</dbReference>
<dbReference type="GlyCosmos" id="Q9V3D4">
    <property type="glycosylation" value="1 site, No reported glycans"/>
</dbReference>
<dbReference type="GlyGen" id="Q9V3D4">
    <property type="glycosylation" value="1 site"/>
</dbReference>
<dbReference type="iPTMnet" id="Q9V3D4"/>
<dbReference type="PaxDb" id="7227-FBpp0080418"/>
<dbReference type="DNASU" id="34979"/>
<dbReference type="EnsemblMetazoa" id="FBtr0080861">
    <property type="protein sequence ID" value="FBpp0080418"/>
    <property type="gene ID" value="FBgn0020415"/>
</dbReference>
<dbReference type="GeneID" id="34979"/>
<dbReference type="KEGG" id="dme:Dmel_CG4475"/>
<dbReference type="AGR" id="FB:FBgn0020415"/>
<dbReference type="CTD" id="34979"/>
<dbReference type="FlyBase" id="FBgn0020415">
    <property type="gene designation" value="Idgf2"/>
</dbReference>
<dbReference type="VEuPathDB" id="VectorBase:FBgn0020415"/>
<dbReference type="eggNOG" id="KOG2806">
    <property type="taxonomic scope" value="Eukaryota"/>
</dbReference>
<dbReference type="GeneTree" id="ENSGT00940000167840"/>
<dbReference type="InParanoid" id="Q9V3D4"/>
<dbReference type="OMA" id="QAYSMNE"/>
<dbReference type="OrthoDB" id="76388at2759"/>
<dbReference type="PhylomeDB" id="Q9V3D4"/>
<dbReference type="Reactome" id="R-DME-6798695">
    <property type="pathway name" value="Neutrophil degranulation"/>
</dbReference>
<dbReference type="BioGRID-ORCS" id="34979">
    <property type="hits" value="0 hits in 1 CRISPR screen"/>
</dbReference>
<dbReference type="EvolutionaryTrace" id="Q9V3D4"/>
<dbReference type="GenomeRNAi" id="34979"/>
<dbReference type="PRO" id="PR:Q9V3D4"/>
<dbReference type="Proteomes" id="UP000000803">
    <property type="component" value="Chromosome 2L"/>
</dbReference>
<dbReference type="Bgee" id="FBgn0020415">
    <property type="expression patterns" value="Expressed in spermathecum and 137 other cell types or tissues"/>
</dbReference>
<dbReference type="ExpressionAtlas" id="Q9V3D4">
    <property type="expression patterns" value="baseline and differential"/>
</dbReference>
<dbReference type="GO" id="GO:0005576">
    <property type="term" value="C:extracellular region"/>
    <property type="evidence" value="ECO:0000318"/>
    <property type="project" value="GO_Central"/>
</dbReference>
<dbReference type="GO" id="GO:0005615">
    <property type="term" value="C:extracellular space"/>
    <property type="evidence" value="ECO:0000314"/>
    <property type="project" value="FlyBase"/>
</dbReference>
<dbReference type="GO" id="GO:0008061">
    <property type="term" value="F:chitin binding"/>
    <property type="evidence" value="ECO:0007669"/>
    <property type="project" value="InterPro"/>
</dbReference>
<dbReference type="GO" id="GO:0008084">
    <property type="term" value="F:imaginal disc growth factor receptor binding"/>
    <property type="evidence" value="ECO:0000314"/>
    <property type="project" value="UniProtKB"/>
</dbReference>
<dbReference type="GO" id="GO:0005975">
    <property type="term" value="P:carbohydrate metabolic process"/>
    <property type="evidence" value="ECO:0007669"/>
    <property type="project" value="InterPro"/>
</dbReference>
<dbReference type="GO" id="GO:0006032">
    <property type="term" value="P:chitin catabolic process"/>
    <property type="evidence" value="ECO:0000318"/>
    <property type="project" value="GO_Central"/>
</dbReference>
<dbReference type="GO" id="GO:0007444">
    <property type="term" value="P:imaginal disc development"/>
    <property type="evidence" value="ECO:0000314"/>
    <property type="project" value="UniProtKB"/>
</dbReference>
<dbReference type="GO" id="GO:0043066">
    <property type="term" value="P:negative regulation of apoptotic process"/>
    <property type="evidence" value="ECO:0000315"/>
    <property type="project" value="FlyBase"/>
</dbReference>
<dbReference type="GO" id="GO:0008284">
    <property type="term" value="P:positive regulation of cell population proliferation"/>
    <property type="evidence" value="ECO:0000315"/>
    <property type="project" value="FlyBase"/>
</dbReference>
<dbReference type="CDD" id="cd02873">
    <property type="entry name" value="GH18_IDGF"/>
    <property type="match status" value="1"/>
</dbReference>
<dbReference type="FunFam" id="3.10.50.10:FF:000007">
    <property type="entry name" value="chitinase-like protein Idgf4"/>
    <property type="match status" value="1"/>
</dbReference>
<dbReference type="FunFam" id="3.20.20.80:FF:000071">
    <property type="entry name" value="Imaginal disc growth factor"/>
    <property type="match status" value="1"/>
</dbReference>
<dbReference type="Gene3D" id="3.10.50.10">
    <property type="match status" value="1"/>
</dbReference>
<dbReference type="Gene3D" id="3.20.20.80">
    <property type="entry name" value="Glycosidases"/>
    <property type="match status" value="1"/>
</dbReference>
<dbReference type="InterPro" id="IPR011583">
    <property type="entry name" value="Chitinase_II/V-like_cat"/>
</dbReference>
<dbReference type="InterPro" id="IPR029070">
    <property type="entry name" value="Chitinase_insertion_sf"/>
</dbReference>
<dbReference type="InterPro" id="IPR001223">
    <property type="entry name" value="Glyco_hydro18_cat"/>
</dbReference>
<dbReference type="InterPro" id="IPR017853">
    <property type="entry name" value="Glycoside_hydrolase_SF"/>
</dbReference>
<dbReference type="InterPro" id="IPR050314">
    <property type="entry name" value="Glycosyl_Hydrlase_18"/>
</dbReference>
<dbReference type="InterPro" id="IPR015520">
    <property type="entry name" value="IDGF"/>
</dbReference>
<dbReference type="PANTHER" id="PTHR11177">
    <property type="entry name" value="CHITINASE"/>
    <property type="match status" value="1"/>
</dbReference>
<dbReference type="PANTHER" id="PTHR11177:SF235">
    <property type="entry name" value="CHITINASE-LIKE PROTEIN IDGF1-RELATED"/>
    <property type="match status" value="1"/>
</dbReference>
<dbReference type="Pfam" id="PF00704">
    <property type="entry name" value="Glyco_hydro_18"/>
    <property type="match status" value="1"/>
</dbReference>
<dbReference type="SMART" id="SM00636">
    <property type="entry name" value="Glyco_18"/>
    <property type="match status" value="1"/>
</dbReference>
<dbReference type="SUPFAM" id="SSF51445">
    <property type="entry name" value="(Trans)glycosidases"/>
    <property type="match status" value="1"/>
</dbReference>
<dbReference type="SUPFAM" id="SSF54556">
    <property type="entry name" value="Chitinase insertion domain"/>
    <property type="match status" value="1"/>
</dbReference>
<dbReference type="PROSITE" id="PS51910">
    <property type="entry name" value="GH18_2"/>
    <property type="match status" value="1"/>
</dbReference>
<feature type="signal peptide">
    <location>
        <begin position="1"/>
        <end position="20"/>
    </location>
</feature>
<feature type="chain" id="PRO_0000011983" description="Chitinase-like protein Idgf2">
    <location>
        <begin position="21"/>
        <end position="440"/>
    </location>
</feature>
<feature type="domain" description="GH18" evidence="1">
    <location>
        <begin position="22"/>
        <end position="440"/>
    </location>
</feature>
<feature type="glycosylation site" description="N-linked (GlcNAc...) asparagine" evidence="2">
    <location>
        <position position="220"/>
    </location>
</feature>
<feature type="disulfide bond" evidence="1 2">
    <location>
        <begin position="26"/>
        <end position="53"/>
    </location>
</feature>
<feature type="disulfide bond" evidence="2">
    <location>
        <begin position="342"/>
        <end position="425"/>
    </location>
</feature>
<feature type="sequence conflict" description="In Ref. 1; AAC99418." evidence="4" ref="1">
    <original>D</original>
    <variation>E</variation>
    <location>
        <position position="137"/>
    </location>
</feature>
<feature type="sequence conflict" description="In Ref. 1; AAC99418." evidence="4" ref="1">
    <original>F</original>
    <variation>V</variation>
    <location>
        <position position="277"/>
    </location>
</feature>
<feature type="strand" evidence="5">
    <location>
        <begin position="23"/>
        <end position="29"/>
    </location>
</feature>
<feature type="helix" evidence="5">
    <location>
        <begin position="30"/>
        <end position="34"/>
    </location>
</feature>
<feature type="helix" evidence="6">
    <location>
        <begin position="37"/>
        <end position="39"/>
    </location>
</feature>
<feature type="helix" evidence="5">
    <location>
        <begin position="43"/>
        <end position="49"/>
    </location>
</feature>
<feature type="helix" evidence="5">
    <location>
        <begin position="50"/>
        <end position="52"/>
    </location>
</feature>
<feature type="strand" evidence="5">
    <location>
        <begin position="54"/>
        <end position="63"/>
    </location>
</feature>
<feature type="turn" evidence="5">
    <location>
        <begin position="65"/>
        <end position="67"/>
    </location>
</feature>
<feature type="strand" evidence="5">
    <location>
        <begin position="70"/>
        <end position="72"/>
    </location>
</feature>
<feature type="helix" evidence="5">
    <location>
        <begin position="75"/>
        <end position="78"/>
    </location>
</feature>
<feature type="turn" evidence="5">
    <location>
        <begin position="79"/>
        <end position="81"/>
    </location>
</feature>
<feature type="helix" evidence="5">
    <location>
        <begin position="83"/>
        <end position="88"/>
    </location>
</feature>
<feature type="helix" evidence="5">
    <location>
        <begin position="89"/>
        <end position="92"/>
    </location>
</feature>
<feature type="strand" evidence="5">
    <location>
        <begin position="98"/>
        <end position="104"/>
    </location>
</feature>
<feature type="helix" evidence="5">
    <location>
        <begin position="116"/>
        <end position="121"/>
    </location>
</feature>
<feature type="helix" evidence="5">
    <location>
        <begin position="125"/>
        <end position="141"/>
    </location>
</feature>
<feature type="strand" evidence="5">
    <location>
        <begin position="145"/>
        <end position="150"/>
    </location>
</feature>
<feature type="helix" evidence="5">
    <location>
        <begin position="186"/>
        <end position="204"/>
    </location>
</feature>
<feature type="turn" evidence="5">
    <location>
        <begin position="205"/>
        <end position="208"/>
    </location>
</feature>
<feature type="strand" evidence="5">
    <location>
        <begin position="210"/>
        <end position="215"/>
    </location>
</feature>
<feature type="helix" evidence="5">
    <location>
        <begin position="221"/>
        <end position="224"/>
    </location>
</feature>
<feature type="helix" evidence="5">
    <location>
        <begin position="227"/>
        <end position="231"/>
    </location>
</feature>
<feature type="strand" evidence="5">
    <location>
        <begin position="235"/>
        <end position="239"/>
    </location>
</feature>
<feature type="turn" evidence="5">
    <location>
        <begin position="247"/>
        <end position="249"/>
    </location>
</feature>
<feature type="helix" evidence="5">
    <location>
        <begin position="275"/>
        <end position="284"/>
    </location>
</feature>
<feature type="helix" evidence="5">
    <location>
        <begin position="289"/>
        <end position="291"/>
    </location>
</feature>
<feature type="strand" evidence="5">
    <location>
        <begin position="292"/>
        <end position="304"/>
    </location>
</feature>
<feature type="helix" evidence="5">
    <location>
        <begin position="307"/>
        <end position="309"/>
    </location>
</feature>
<feature type="strand" evidence="6">
    <location>
        <begin position="317"/>
        <end position="319"/>
    </location>
</feature>
<feature type="turn" evidence="5">
    <location>
        <begin position="328"/>
        <end position="330"/>
    </location>
</feature>
<feature type="strand" evidence="5">
    <location>
        <begin position="335"/>
        <end position="337"/>
    </location>
</feature>
<feature type="helix" evidence="5">
    <location>
        <begin position="338"/>
        <end position="344"/>
    </location>
</feature>
<feature type="turn" evidence="5">
    <location>
        <begin position="348"/>
        <end position="352"/>
    </location>
</feature>
<feature type="helix" evidence="5">
    <location>
        <begin position="355"/>
        <end position="357"/>
    </location>
</feature>
<feature type="strand" evidence="5">
    <location>
        <begin position="360"/>
        <end position="363"/>
    </location>
</feature>
<feature type="strand" evidence="6">
    <location>
        <begin position="368"/>
        <end position="370"/>
    </location>
</feature>
<feature type="strand" evidence="5">
    <location>
        <begin position="372"/>
        <end position="376"/>
    </location>
</feature>
<feature type="strand" evidence="5">
    <location>
        <begin position="386"/>
        <end position="390"/>
    </location>
</feature>
<feature type="helix" evidence="5">
    <location>
        <begin position="393"/>
        <end position="405"/>
    </location>
</feature>
<feature type="strand" evidence="5">
    <location>
        <begin position="409"/>
        <end position="414"/>
    </location>
</feature>
<feature type="helix" evidence="5">
    <location>
        <begin position="416"/>
        <end position="418"/>
    </location>
</feature>
<feature type="turn" evidence="5">
    <location>
        <begin position="424"/>
        <end position="426"/>
    </location>
</feature>
<feature type="helix" evidence="5">
    <location>
        <begin position="431"/>
        <end position="439"/>
    </location>
</feature>
<keyword id="KW-0002">3D-structure</keyword>
<keyword id="KW-0217">Developmental protein</keyword>
<keyword id="KW-1015">Disulfide bond</keyword>
<keyword id="KW-0325">Glycoprotein</keyword>
<keyword id="KW-1185">Reference proteome</keyword>
<keyword id="KW-0964">Secreted</keyword>
<keyword id="KW-0732">Signal</keyword>
<gene>
    <name type="primary">Idgf2</name>
    <name type="ORF">CG4475</name>
</gene>
<evidence type="ECO:0000255" key="1">
    <source>
        <dbReference type="PROSITE-ProRule" id="PRU01258"/>
    </source>
</evidence>
<evidence type="ECO:0000269" key="2">
    <source>
    </source>
</evidence>
<evidence type="ECO:0000269" key="3">
    <source>
    </source>
</evidence>
<evidence type="ECO:0000305" key="4"/>
<evidence type="ECO:0007829" key="5">
    <source>
        <dbReference type="PDB" id="1JND"/>
    </source>
</evidence>
<evidence type="ECO:0007829" key="6">
    <source>
        <dbReference type="PDB" id="1JNE"/>
    </source>
</evidence>
<accession>Q9V3D4</accession>
<accession>O96665</accession>
<comment type="function">
    <text evidence="3">Cooperates with insulin-like peptides to stimulate the proliferation, polarization and motility of imaginal disk cells. May act by stabilizing the binding of insulin-like peptides to its receptor through a simultaneous interaction with both molecules to form a multiprotein signaling complex.</text>
</comment>
<comment type="subcellular location">
    <subcellularLocation>
        <location evidence="3">Secreted</location>
    </subcellularLocation>
    <text>Secreted in hemolymph. It is probably transported to target tissues via hemolymph.</text>
</comment>
<comment type="tissue specificity">
    <text evidence="3">Primarily expressed in yolk cells and fat body. In larvae, it is expressed in the imaginal ring and weakly expressed in imaginal disks. More strongly expressed than Idgf1 and Idgf3.</text>
</comment>
<comment type="developmental stage">
    <text evidence="3">Expressed both maternally and zygotically. Expressed throughout development, with a much stronger expression during larval stages.</text>
</comment>
<comment type="PTM">
    <text evidence="2">Glycosylated.</text>
</comment>
<comment type="miscellaneous">
    <text>Lacks the typical Glu active site in position 152 that is replaced by a Gln residue, preventing the hydrolase activity. Its precise function remains unclear.</text>
</comment>
<comment type="similarity">
    <text evidence="4">Belongs to the glycosyl hydrolase 18 family. IDGF subfamily.</text>
</comment>
<proteinExistence type="evidence at protein level"/>
<name>IDGF2_DROME</name>
<reference key="1">
    <citation type="journal article" date="1999" name="Development">
        <title>A new family of growth factors produced by the fat body and active on Drosophila imaginal disc cells.</title>
        <authorList>
            <person name="Kawamura K."/>
            <person name="Shibata T."/>
            <person name="Saget O."/>
            <person name="Peel D."/>
            <person name="Bryant P.J."/>
        </authorList>
    </citation>
    <scope>NUCLEOTIDE SEQUENCE [MRNA]</scope>
    <scope>FUNCTION</scope>
    <scope>SUBCELLULAR LOCATION</scope>
    <scope>TISSUE SPECIFICITY</scope>
    <scope>DEVELOPMENTAL STAGE</scope>
    <source>
        <tissue>Imaginal disk</tissue>
    </source>
</reference>
<reference key="2">
    <citation type="journal article" date="1999" name="Genetics">
        <title>An exploration of the sequence of a 2.9-Mb region of the genome of Drosophila melanogaster: the Adh region.</title>
        <authorList>
            <person name="Ashburner M."/>
            <person name="Misra S."/>
            <person name="Roote J."/>
            <person name="Lewis S.E."/>
            <person name="Blazej R.G."/>
            <person name="Davis T."/>
            <person name="Doyle C."/>
            <person name="Galle R.F."/>
            <person name="George R.A."/>
            <person name="Harris N.L."/>
            <person name="Hartzell G."/>
            <person name="Harvey D.A."/>
            <person name="Hong L."/>
            <person name="Houston K.A."/>
            <person name="Hoskins R.A."/>
            <person name="Johnson G."/>
            <person name="Martin C."/>
            <person name="Moshrefi A.R."/>
            <person name="Palazzolo M."/>
            <person name="Reese M.G."/>
            <person name="Spradling A.C."/>
            <person name="Tsang G."/>
            <person name="Wan K.H."/>
            <person name="Whitelaw K."/>
            <person name="Celniker S.E."/>
            <person name="Rubin G.M."/>
        </authorList>
    </citation>
    <scope>NUCLEOTIDE SEQUENCE [LARGE SCALE GENOMIC DNA]</scope>
    <source>
        <strain>Berkeley</strain>
    </source>
</reference>
<reference key="3">
    <citation type="journal article" date="2000" name="Science">
        <title>The genome sequence of Drosophila melanogaster.</title>
        <authorList>
            <person name="Adams M.D."/>
            <person name="Celniker S.E."/>
            <person name="Holt R.A."/>
            <person name="Evans C.A."/>
            <person name="Gocayne J.D."/>
            <person name="Amanatides P.G."/>
            <person name="Scherer S.E."/>
            <person name="Li P.W."/>
            <person name="Hoskins R.A."/>
            <person name="Galle R.F."/>
            <person name="George R.A."/>
            <person name="Lewis S.E."/>
            <person name="Richards S."/>
            <person name="Ashburner M."/>
            <person name="Henderson S.N."/>
            <person name="Sutton G.G."/>
            <person name="Wortman J.R."/>
            <person name="Yandell M.D."/>
            <person name="Zhang Q."/>
            <person name="Chen L.X."/>
            <person name="Brandon R.C."/>
            <person name="Rogers Y.-H.C."/>
            <person name="Blazej R.G."/>
            <person name="Champe M."/>
            <person name="Pfeiffer B.D."/>
            <person name="Wan K.H."/>
            <person name="Doyle C."/>
            <person name="Baxter E.G."/>
            <person name="Helt G."/>
            <person name="Nelson C.R."/>
            <person name="Miklos G.L.G."/>
            <person name="Abril J.F."/>
            <person name="Agbayani A."/>
            <person name="An H.-J."/>
            <person name="Andrews-Pfannkoch C."/>
            <person name="Baldwin D."/>
            <person name="Ballew R.M."/>
            <person name="Basu A."/>
            <person name="Baxendale J."/>
            <person name="Bayraktaroglu L."/>
            <person name="Beasley E.M."/>
            <person name="Beeson K.Y."/>
            <person name="Benos P.V."/>
            <person name="Berman B.P."/>
            <person name="Bhandari D."/>
            <person name="Bolshakov S."/>
            <person name="Borkova D."/>
            <person name="Botchan M.R."/>
            <person name="Bouck J."/>
            <person name="Brokstein P."/>
            <person name="Brottier P."/>
            <person name="Burtis K.C."/>
            <person name="Busam D.A."/>
            <person name="Butler H."/>
            <person name="Cadieu E."/>
            <person name="Center A."/>
            <person name="Chandra I."/>
            <person name="Cherry J.M."/>
            <person name="Cawley S."/>
            <person name="Dahlke C."/>
            <person name="Davenport L.B."/>
            <person name="Davies P."/>
            <person name="de Pablos B."/>
            <person name="Delcher A."/>
            <person name="Deng Z."/>
            <person name="Mays A.D."/>
            <person name="Dew I."/>
            <person name="Dietz S.M."/>
            <person name="Dodson K."/>
            <person name="Doup L.E."/>
            <person name="Downes M."/>
            <person name="Dugan-Rocha S."/>
            <person name="Dunkov B.C."/>
            <person name="Dunn P."/>
            <person name="Durbin K.J."/>
            <person name="Evangelista C.C."/>
            <person name="Ferraz C."/>
            <person name="Ferriera S."/>
            <person name="Fleischmann W."/>
            <person name="Fosler C."/>
            <person name="Gabrielian A.E."/>
            <person name="Garg N.S."/>
            <person name="Gelbart W.M."/>
            <person name="Glasser K."/>
            <person name="Glodek A."/>
            <person name="Gong F."/>
            <person name="Gorrell J.H."/>
            <person name="Gu Z."/>
            <person name="Guan P."/>
            <person name="Harris M."/>
            <person name="Harris N.L."/>
            <person name="Harvey D.A."/>
            <person name="Heiman T.J."/>
            <person name="Hernandez J.R."/>
            <person name="Houck J."/>
            <person name="Hostin D."/>
            <person name="Houston K.A."/>
            <person name="Howland T.J."/>
            <person name="Wei M.-H."/>
            <person name="Ibegwam C."/>
            <person name="Jalali M."/>
            <person name="Kalush F."/>
            <person name="Karpen G.H."/>
            <person name="Ke Z."/>
            <person name="Kennison J.A."/>
            <person name="Ketchum K.A."/>
            <person name="Kimmel B.E."/>
            <person name="Kodira C.D."/>
            <person name="Kraft C.L."/>
            <person name="Kravitz S."/>
            <person name="Kulp D."/>
            <person name="Lai Z."/>
            <person name="Lasko P."/>
            <person name="Lei Y."/>
            <person name="Levitsky A.A."/>
            <person name="Li J.H."/>
            <person name="Li Z."/>
            <person name="Liang Y."/>
            <person name="Lin X."/>
            <person name="Liu X."/>
            <person name="Mattei B."/>
            <person name="McIntosh T.C."/>
            <person name="McLeod M.P."/>
            <person name="McPherson D."/>
            <person name="Merkulov G."/>
            <person name="Milshina N.V."/>
            <person name="Mobarry C."/>
            <person name="Morris J."/>
            <person name="Moshrefi A."/>
            <person name="Mount S.M."/>
            <person name="Moy M."/>
            <person name="Murphy B."/>
            <person name="Murphy L."/>
            <person name="Muzny D.M."/>
            <person name="Nelson D.L."/>
            <person name="Nelson D.R."/>
            <person name="Nelson K.A."/>
            <person name="Nixon K."/>
            <person name="Nusskern D.R."/>
            <person name="Pacleb J.M."/>
            <person name="Palazzolo M."/>
            <person name="Pittman G.S."/>
            <person name="Pan S."/>
            <person name="Pollard J."/>
            <person name="Puri V."/>
            <person name="Reese M.G."/>
            <person name="Reinert K."/>
            <person name="Remington K."/>
            <person name="Saunders R.D.C."/>
            <person name="Scheeler F."/>
            <person name="Shen H."/>
            <person name="Shue B.C."/>
            <person name="Siden-Kiamos I."/>
            <person name="Simpson M."/>
            <person name="Skupski M.P."/>
            <person name="Smith T.J."/>
            <person name="Spier E."/>
            <person name="Spradling A.C."/>
            <person name="Stapleton M."/>
            <person name="Strong R."/>
            <person name="Sun E."/>
            <person name="Svirskas R."/>
            <person name="Tector C."/>
            <person name="Turner R."/>
            <person name="Venter E."/>
            <person name="Wang A.H."/>
            <person name="Wang X."/>
            <person name="Wang Z.-Y."/>
            <person name="Wassarman D.A."/>
            <person name="Weinstock G.M."/>
            <person name="Weissenbach J."/>
            <person name="Williams S.M."/>
            <person name="Woodage T."/>
            <person name="Worley K.C."/>
            <person name="Wu D."/>
            <person name="Yang S."/>
            <person name="Yao Q.A."/>
            <person name="Ye J."/>
            <person name="Yeh R.-F."/>
            <person name="Zaveri J.S."/>
            <person name="Zhan M."/>
            <person name="Zhang G."/>
            <person name="Zhao Q."/>
            <person name="Zheng L."/>
            <person name="Zheng X.H."/>
            <person name="Zhong F.N."/>
            <person name="Zhong W."/>
            <person name="Zhou X."/>
            <person name="Zhu S.C."/>
            <person name="Zhu X."/>
            <person name="Smith H.O."/>
            <person name="Gibbs R.A."/>
            <person name="Myers E.W."/>
            <person name="Rubin G.M."/>
            <person name="Venter J.C."/>
        </authorList>
    </citation>
    <scope>NUCLEOTIDE SEQUENCE [LARGE SCALE GENOMIC DNA]</scope>
    <source>
        <strain>Berkeley</strain>
    </source>
</reference>
<reference key="4">
    <citation type="journal article" date="2002" name="Genome Biol.">
        <title>Annotation of the Drosophila melanogaster euchromatic genome: a systematic review.</title>
        <authorList>
            <person name="Misra S."/>
            <person name="Crosby M.A."/>
            <person name="Mungall C.J."/>
            <person name="Matthews B.B."/>
            <person name="Campbell K.S."/>
            <person name="Hradecky P."/>
            <person name="Huang Y."/>
            <person name="Kaminker J.S."/>
            <person name="Millburn G.H."/>
            <person name="Prochnik S.E."/>
            <person name="Smith C.D."/>
            <person name="Tupy J.L."/>
            <person name="Whitfield E.J."/>
            <person name="Bayraktaroglu L."/>
            <person name="Berman B.P."/>
            <person name="Bettencourt B.R."/>
            <person name="Celniker S.E."/>
            <person name="de Grey A.D.N.J."/>
            <person name="Drysdale R.A."/>
            <person name="Harris N.L."/>
            <person name="Richter J."/>
            <person name="Russo S."/>
            <person name="Schroeder A.J."/>
            <person name="Shu S.Q."/>
            <person name="Stapleton M."/>
            <person name="Yamada C."/>
            <person name="Ashburner M."/>
            <person name="Gelbart W.M."/>
            <person name="Rubin G.M."/>
            <person name="Lewis S.E."/>
        </authorList>
    </citation>
    <scope>GENOME REANNOTATION</scope>
    <source>
        <strain>Berkeley</strain>
    </source>
</reference>
<reference key="5">
    <citation type="journal article" date="2002" name="Genome Biol.">
        <title>A Drosophila full-length cDNA resource.</title>
        <authorList>
            <person name="Stapleton M."/>
            <person name="Carlson J.W."/>
            <person name="Brokstein P."/>
            <person name="Yu C."/>
            <person name="Champe M."/>
            <person name="George R.A."/>
            <person name="Guarin H."/>
            <person name="Kronmiller B."/>
            <person name="Pacleb J.M."/>
            <person name="Park S."/>
            <person name="Wan K.H."/>
            <person name="Rubin G.M."/>
            <person name="Celniker S.E."/>
        </authorList>
    </citation>
    <scope>NUCLEOTIDE SEQUENCE [LARGE SCALE MRNA]</scope>
    <source>
        <strain>Berkeley</strain>
        <tissue>Head</tissue>
    </source>
</reference>
<reference key="6">
    <citation type="journal article" date="2002" name="J. Biol. Chem.">
        <title>Crystal structure of imaginal disc growth factor-2. A member of a new family of growth-promoting glycoproteins from Drosophila melanogaster.</title>
        <authorList>
            <person name="Varela P.F."/>
            <person name="Llera A.S."/>
            <person name="Mariuzza R.A."/>
            <person name="Tormo J."/>
        </authorList>
    </citation>
    <scope>X-RAY CRYSTALLOGRAPHY (1.3 ANGSTROMS)</scope>
    <scope>GLYCOSYLATION</scope>
    <scope>DISULFIDE BONDS</scope>
</reference>
<protein>
    <recommendedName>
        <fullName>Chitinase-like protein Idgf2</fullName>
    </recommendedName>
    <alternativeName>
        <fullName>Imaginal disk growth factor protein 2</fullName>
    </alternativeName>
</protein>
<sequence length="440" mass="49159">MKAWIWFTFVACLFAASTEAASNLVCYYDSSSYTREGLGKLLNPDLEIALQFCSHLVYGYAGLRGENLQAYSMNENLDIYKHQFSEVTSLKRKYPHLKVLLSVGGDHDIDPDHPNKYIDLLEGEKVRQIGFIRSAYDLVKTYGFDGLDLAYQFPKNKPRKVHGDLGLAWKSIKKLFTGDFIVDPHAALHKEQFTALVRDVKDSLRADGFLLSLTVLPNVNSTWYFDIPALNGLVDFVNLATFDFLTPARNPEEADYSAPIYHPDGSKDRLAHLNADFQVEYWLSQGFPSNKINLGVATYGNAWKLTKDSGLEGVPVVPETSGPAPEGFQSQKPGLLSYAEICGKLSNPQNQFLKGNESPLRRVSDPTKRFGGIAYRPVDGQITEGIWVSYDDPDSASNKAAYARVKNLGGVALFDLSYDDFRGQCSGDKYPILRAIKYRL</sequence>
<organism>
    <name type="scientific">Drosophila melanogaster</name>
    <name type="common">Fruit fly</name>
    <dbReference type="NCBI Taxonomy" id="7227"/>
    <lineage>
        <taxon>Eukaryota</taxon>
        <taxon>Metazoa</taxon>
        <taxon>Ecdysozoa</taxon>
        <taxon>Arthropoda</taxon>
        <taxon>Hexapoda</taxon>
        <taxon>Insecta</taxon>
        <taxon>Pterygota</taxon>
        <taxon>Neoptera</taxon>
        <taxon>Endopterygota</taxon>
        <taxon>Diptera</taxon>
        <taxon>Brachycera</taxon>
        <taxon>Muscomorpha</taxon>
        <taxon>Ephydroidea</taxon>
        <taxon>Drosophilidae</taxon>
        <taxon>Drosophila</taxon>
        <taxon>Sophophora</taxon>
    </lineage>
</organism>